<accession>B5FF08</accession>
<protein>
    <recommendedName>
        <fullName evidence="1">7-cyano-7-deazaguanine synthase</fullName>
        <ecNumber evidence="1">6.3.4.20</ecNumber>
    </recommendedName>
    <alternativeName>
        <fullName evidence="1">7-cyano-7-carbaguanine synthase</fullName>
    </alternativeName>
    <alternativeName>
        <fullName evidence="1">PreQ(0) synthase</fullName>
    </alternativeName>
    <alternativeName>
        <fullName evidence="1">Queuosine biosynthesis protein QueC</fullName>
    </alternativeName>
</protein>
<proteinExistence type="inferred from homology"/>
<name>QUEC_ALIFM</name>
<comment type="function">
    <text evidence="1">Catalyzes the ATP-dependent conversion of 7-carboxy-7-deazaguanine (CDG) to 7-cyano-7-deazaguanine (preQ(0)).</text>
</comment>
<comment type="catalytic activity">
    <reaction evidence="1">
        <text>7-carboxy-7-deazaguanine + NH4(+) + ATP = 7-cyano-7-deazaguanine + ADP + phosphate + H2O + H(+)</text>
        <dbReference type="Rhea" id="RHEA:27982"/>
        <dbReference type="ChEBI" id="CHEBI:15377"/>
        <dbReference type="ChEBI" id="CHEBI:15378"/>
        <dbReference type="ChEBI" id="CHEBI:28938"/>
        <dbReference type="ChEBI" id="CHEBI:30616"/>
        <dbReference type="ChEBI" id="CHEBI:43474"/>
        <dbReference type="ChEBI" id="CHEBI:45075"/>
        <dbReference type="ChEBI" id="CHEBI:61036"/>
        <dbReference type="ChEBI" id="CHEBI:456216"/>
        <dbReference type="EC" id="6.3.4.20"/>
    </reaction>
</comment>
<comment type="cofactor">
    <cofactor evidence="1">
        <name>Zn(2+)</name>
        <dbReference type="ChEBI" id="CHEBI:29105"/>
    </cofactor>
    <text evidence="1">Binds 1 zinc ion per subunit.</text>
</comment>
<comment type="pathway">
    <text evidence="1">Purine metabolism; 7-cyano-7-deazaguanine biosynthesis.</text>
</comment>
<comment type="similarity">
    <text evidence="1">Belongs to the QueC family.</text>
</comment>
<keyword id="KW-0067">ATP-binding</keyword>
<keyword id="KW-0436">Ligase</keyword>
<keyword id="KW-0479">Metal-binding</keyword>
<keyword id="KW-0547">Nucleotide-binding</keyword>
<keyword id="KW-0671">Queuosine biosynthesis</keyword>
<keyword id="KW-0862">Zinc</keyword>
<dbReference type="EC" id="6.3.4.20" evidence="1"/>
<dbReference type="EMBL" id="CP001139">
    <property type="protein sequence ID" value="ACH65666.1"/>
    <property type="molecule type" value="Genomic_DNA"/>
</dbReference>
<dbReference type="RefSeq" id="WP_012533204.1">
    <property type="nucleotide sequence ID" value="NC_011184.1"/>
</dbReference>
<dbReference type="SMR" id="B5FF08"/>
<dbReference type="KEGG" id="vfm:VFMJ11_1683"/>
<dbReference type="HOGENOM" id="CLU_081854_0_0_6"/>
<dbReference type="UniPathway" id="UPA00391"/>
<dbReference type="Proteomes" id="UP000001857">
    <property type="component" value="Chromosome I"/>
</dbReference>
<dbReference type="GO" id="GO:0005524">
    <property type="term" value="F:ATP binding"/>
    <property type="evidence" value="ECO:0007669"/>
    <property type="project" value="UniProtKB-UniRule"/>
</dbReference>
<dbReference type="GO" id="GO:0016879">
    <property type="term" value="F:ligase activity, forming carbon-nitrogen bonds"/>
    <property type="evidence" value="ECO:0007669"/>
    <property type="project" value="UniProtKB-UniRule"/>
</dbReference>
<dbReference type="GO" id="GO:0008270">
    <property type="term" value="F:zinc ion binding"/>
    <property type="evidence" value="ECO:0007669"/>
    <property type="project" value="UniProtKB-UniRule"/>
</dbReference>
<dbReference type="GO" id="GO:0008616">
    <property type="term" value="P:queuosine biosynthetic process"/>
    <property type="evidence" value="ECO:0007669"/>
    <property type="project" value="UniProtKB-UniRule"/>
</dbReference>
<dbReference type="CDD" id="cd01995">
    <property type="entry name" value="QueC-like"/>
    <property type="match status" value="1"/>
</dbReference>
<dbReference type="FunFam" id="3.40.50.620:FF:000017">
    <property type="entry name" value="7-cyano-7-deazaguanine synthase"/>
    <property type="match status" value="1"/>
</dbReference>
<dbReference type="Gene3D" id="3.40.50.620">
    <property type="entry name" value="HUPs"/>
    <property type="match status" value="1"/>
</dbReference>
<dbReference type="HAMAP" id="MF_01633">
    <property type="entry name" value="QueC"/>
    <property type="match status" value="1"/>
</dbReference>
<dbReference type="InterPro" id="IPR018317">
    <property type="entry name" value="QueC"/>
</dbReference>
<dbReference type="InterPro" id="IPR014729">
    <property type="entry name" value="Rossmann-like_a/b/a_fold"/>
</dbReference>
<dbReference type="NCBIfam" id="TIGR00364">
    <property type="entry name" value="7-cyano-7-deazaguanine synthase QueC"/>
    <property type="match status" value="1"/>
</dbReference>
<dbReference type="NCBIfam" id="NF008317">
    <property type="entry name" value="PRK11106.1"/>
    <property type="match status" value="1"/>
</dbReference>
<dbReference type="PANTHER" id="PTHR42914">
    <property type="entry name" value="7-CYANO-7-DEAZAGUANINE SYNTHASE"/>
    <property type="match status" value="1"/>
</dbReference>
<dbReference type="PANTHER" id="PTHR42914:SF1">
    <property type="entry name" value="7-CYANO-7-DEAZAGUANINE SYNTHASE"/>
    <property type="match status" value="1"/>
</dbReference>
<dbReference type="Pfam" id="PF06508">
    <property type="entry name" value="QueC"/>
    <property type="match status" value="1"/>
</dbReference>
<dbReference type="PIRSF" id="PIRSF006293">
    <property type="entry name" value="ExsB"/>
    <property type="match status" value="1"/>
</dbReference>
<dbReference type="SUPFAM" id="SSF52402">
    <property type="entry name" value="Adenine nucleotide alpha hydrolases-like"/>
    <property type="match status" value="1"/>
</dbReference>
<gene>
    <name evidence="1" type="primary">queC</name>
    <name type="ordered locus">VFMJ11_1683</name>
</gene>
<organism>
    <name type="scientific">Aliivibrio fischeri (strain MJ11)</name>
    <name type="common">Vibrio fischeri</name>
    <dbReference type="NCBI Taxonomy" id="388396"/>
    <lineage>
        <taxon>Bacteria</taxon>
        <taxon>Pseudomonadati</taxon>
        <taxon>Pseudomonadota</taxon>
        <taxon>Gammaproteobacteria</taxon>
        <taxon>Vibrionales</taxon>
        <taxon>Vibrionaceae</taxon>
        <taxon>Aliivibrio</taxon>
    </lineage>
</organism>
<evidence type="ECO:0000255" key="1">
    <source>
        <dbReference type="HAMAP-Rule" id="MF_01633"/>
    </source>
</evidence>
<feature type="chain" id="PRO_1000186643" description="7-cyano-7-deazaguanine synthase">
    <location>
        <begin position="1"/>
        <end position="227"/>
    </location>
</feature>
<feature type="binding site" evidence="1">
    <location>
        <begin position="8"/>
        <end position="18"/>
    </location>
    <ligand>
        <name>ATP</name>
        <dbReference type="ChEBI" id="CHEBI:30616"/>
    </ligand>
</feature>
<feature type="binding site" evidence="1">
    <location>
        <position position="187"/>
    </location>
    <ligand>
        <name>Zn(2+)</name>
        <dbReference type="ChEBI" id="CHEBI:29105"/>
    </ligand>
</feature>
<feature type="binding site" evidence="1">
    <location>
        <position position="196"/>
    </location>
    <ligand>
        <name>Zn(2+)</name>
        <dbReference type="ChEBI" id="CHEBI:29105"/>
    </ligand>
</feature>
<feature type="binding site" evidence="1">
    <location>
        <position position="199"/>
    </location>
    <ligand>
        <name>Zn(2+)</name>
        <dbReference type="ChEBI" id="CHEBI:29105"/>
    </ligand>
</feature>
<feature type="binding site" evidence="1">
    <location>
        <position position="202"/>
    </location>
    <ligand>
        <name>Zn(2+)</name>
        <dbReference type="ChEBI" id="CHEBI:29105"/>
    </ligand>
</feature>
<reference key="1">
    <citation type="submission" date="2008-08" db="EMBL/GenBank/DDBJ databases">
        <title>Complete sequence of Vibrio fischeri strain MJ11.</title>
        <authorList>
            <person name="Mandel M.J."/>
            <person name="Stabb E.V."/>
            <person name="Ruby E.G."/>
            <person name="Ferriera S."/>
            <person name="Johnson J."/>
            <person name="Kravitz S."/>
            <person name="Beeson K."/>
            <person name="Sutton G."/>
            <person name="Rogers Y.-H."/>
            <person name="Friedman R."/>
            <person name="Frazier M."/>
            <person name="Venter J.C."/>
        </authorList>
    </citation>
    <scope>NUCLEOTIDE SEQUENCE [LARGE SCALE GENOMIC DNA]</scope>
    <source>
        <strain>MJ11</strain>
    </source>
</reference>
<sequence>MSTAIVVFSGGQDSTTCLIQALTQYDHVHCITFDYGQRHNQEIEVAKKVAIELGAASHKVMDVGLLNELAVSSLTRDNIPVSHELQENGLPNSFVPGRNILFLTLAGIYAYQLGAEAVLTGVCETDFSGYPDCRDEFVKSINQSLVLGMDRQLEIKTPLMWLNKAETWALADKYGKLDYVRNHTLTCYNGVIGDGCGDCPSCDLRKNGLDAYLENKESVMADLESKL</sequence>